<organism>
    <name type="scientific">Streptococcus pyogenes serotype M5 (strain Manfredo)</name>
    <dbReference type="NCBI Taxonomy" id="160491"/>
    <lineage>
        <taxon>Bacteria</taxon>
        <taxon>Bacillati</taxon>
        <taxon>Bacillota</taxon>
        <taxon>Bacilli</taxon>
        <taxon>Lactobacillales</taxon>
        <taxon>Streptococcaceae</taxon>
        <taxon>Streptococcus</taxon>
    </lineage>
</organism>
<evidence type="ECO:0000255" key="1">
    <source>
        <dbReference type="HAMAP-Rule" id="MF_01114"/>
    </source>
</evidence>
<name>RECX_STRPG</name>
<feature type="chain" id="PRO_1000065220" description="Regulatory protein RecX">
    <location>
        <begin position="1"/>
        <end position="258"/>
    </location>
</feature>
<gene>
    <name evidence="1" type="primary">recX</name>
    <name type="ordered locus">SpyM50470</name>
</gene>
<comment type="function">
    <text evidence="1">Modulates RecA activity.</text>
</comment>
<comment type="subcellular location">
    <subcellularLocation>
        <location evidence="1">Cytoplasm</location>
    </subcellularLocation>
</comment>
<comment type="similarity">
    <text evidence="1">Belongs to the RecX family.</text>
</comment>
<reference key="1">
    <citation type="journal article" date="2007" name="J. Bacteriol.">
        <title>Complete genome of acute rheumatic fever-associated serotype M5 Streptococcus pyogenes strain Manfredo.</title>
        <authorList>
            <person name="Holden M.T.G."/>
            <person name="Scott A."/>
            <person name="Cherevach I."/>
            <person name="Chillingworth T."/>
            <person name="Churcher C."/>
            <person name="Cronin A."/>
            <person name="Dowd L."/>
            <person name="Feltwell T."/>
            <person name="Hamlin N."/>
            <person name="Holroyd S."/>
            <person name="Jagels K."/>
            <person name="Moule S."/>
            <person name="Mungall K."/>
            <person name="Quail M.A."/>
            <person name="Price C."/>
            <person name="Rabbinowitsch E."/>
            <person name="Sharp S."/>
            <person name="Skelton J."/>
            <person name="Whitehead S."/>
            <person name="Barrell B.G."/>
            <person name="Kehoe M."/>
            <person name="Parkhill J."/>
        </authorList>
    </citation>
    <scope>NUCLEOTIDE SEQUENCE [LARGE SCALE GENOMIC DNA]</scope>
    <source>
        <strain>Manfredo</strain>
    </source>
</reference>
<protein>
    <recommendedName>
        <fullName evidence="1">Regulatory protein RecX</fullName>
    </recommendedName>
</protein>
<proteinExistence type="inferred from homology"/>
<accession>A2RD87</accession>
<keyword id="KW-0963">Cytoplasm</keyword>
<dbReference type="EMBL" id="AM295007">
    <property type="protein sequence ID" value="CAM29812.1"/>
    <property type="molecule type" value="Genomic_DNA"/>
</dbReference>
<dbReference type="RefSeq" id="WP_011888675.1">
    <property type="nucleotide sequence ID" value="NC_009332.1"/>
</dbReference>
<dbReference type="SMR" id="A2RD87"/>
<dbReference type="KEGG" id="spf:SpyM50470"/>
<dbReference type="HOGENOM" id="CLU_066607_4_0_9"/>
<dbReference type="GO" id="GO:0005737">
    <property type="term" value="C:cytoplasm"/>
    <property type="evidence" value="ECO:0007669"/>
    <property type="project" value="UniProtKB-SubCell"/>
</dbReference>
<dbReference type="GO" id="GO:0006282">
    <property type="term" value="P:regulation of DNA repair"/>
    <property type="evidence" value="ECO:0007669"/>
    <property type="project" value="UniProtKB-UniRule"/>
</dbReference>
<dbReference type="Gene3D" id="1.10.10.10">
    <property type="entry name" value="Winged helix-like DNA-binding domain superfamily/Winged helix DNA-binding domain"/>
    <property type="match status" value="4"/>
</dbReference>
<dbReference type="HAMAP" id="MF_01114">
    <property type="entry name" value="RecX"/>
    <property type="match status" value="1"/>
</dbReference>
<dbReference type="InterPro" id="IPR053926">
    <property type="entry name" value="RecX_HTH_1st"/>
</dbReference>
<dbReference type="InterPro" id="IPR053924">
    <property type="entry name" value="RecX_HTH_2nd"/>
</dbReference>
<dbReference type="InterPro" id="IPR053925">
    <property type="entry name" value="RecX_HTH_3rd"/>
</dbReference>
<dbReference type="InterPro" id="IPR003783">
    <property type="entry name" value="Regulatory_RecX"/>
</dbReference>
<dbReference type="InterPro" id="IPR036388">
    <property type="entry name" value="WH-like_DNA-bd_sf"/>
</dbReference>
<dbReference type="NCBIfam" id="NF010733">
    <property type="entry name" value="PRK14135.1"/>
    <property type="match status" value="1"/>
</dbReference>
<dbReference type="PANTHER" id="PTHR33602">
    <property type="entry name" value="REGULATORY PROTEIN RECX FAMILY PROTEIN"/>
    <property type="match status" value="1"/>
</dbReference>
<dbReference type="PANTHER" id="PTHR33602:SF1">
    <property type="entry name" value="REGULATORY PROTEIN RECX FAMILY PROTEIN"/>
    <property type="match status" value="1"/>
</dbReference>
<dbReference type="Pfam" id="PF21982">
    <property type="entry name" value="RecX_HTH1"/>
    <property type="match status" value="1"/>
</dbReference>
<dbReference type="Pfam" id="PF02631">
    <property type="entry name" value="RecX_HTH2"/>
    <property type="match status" value="1"/>
</dbReference>
<dbReference type="Pfam" id="PF21981">
    <property type="entry name" value="RecX_HTH3"/>
    <property type="match status" value="2"/>
</dbReference>
<sequence>MKITKIEKKKRLYLIELDNDDSLYVTEDTIVRFMLSKDKVLDNDQLEDMKHFAQLSYGKNLALYFLSFQQRSNKQVADYLRKHEIEEHIIPDIITQLQEEQWIDDTKLADTYIRQNQLNGDKGPQVLKQKLLQKGIASHDIDPILSQTDFSQLAQKVSQKLFDKYQEKLPPKALKDKITQALLTKGFSYDLAKRSLNHLNFDQDNQEIEDLLDKELDKQYRKLSRKYDGYTLKQKLYQALYRKGYNSDDINCKLRNYL</sequence>